<evidence type="ECO:0000250" key="1"/>
<evidence type="ECO:0000255" key="2">
    <source>
        <dbReference type="HAMAP-Rule" id="MF_01303"/>
    </source>
</evidence>
<evidence type="ECO:0000305" key="3"/>
<gene>
    <name evidence="2" type="primary">psaC</name>
    <name type="ORF">Nip170</name>
</gene>
<comment type="function">
    <text evidence="2">Apoprotein for the two 4Fe-4S centers FA and FB of photosystem I (PSI); essential for photochemical activity. FB is the terminal electron acceptor of PSI, donating electrons to ferredoxin. The C-terminus interacts with PsaA/B/D and helps assemble the protein into the PSI complex. Required for binding of PsaD and PsaE to PSI. PSI is a plastocyanin-ferredoxin oxidoreductase, converting photonic excitation into a charge separation, which transfers an electron from the donor P700 chlorophyll pair to the spectroscopically characterized acceptors A0, A1, FX, FA and FB in turn.</text>
</comment>
<comment type="catalytic activity">
    <reaction evidence="2">
        <text>reduced [plastocyanin] + hnu + oxidized [2Fe-2S]-[ferredoxin] = oxidized [plastocyanin] + reduced [2Fe-2S]-[ferredoxin]</text>
        <dbReference type="Rhea" id="RHEA:30407"/>
        <dbReference type="Rhea" id="RHEA-COMP:10000"/>
        <dbReference type="Rhea" id="RHEA-COMP:10001"/>
        <dbReference type="Rhea" id="RHEA-COMP:10039"/>
        <dbReference type="Rhea" id="RHEA-COMP:10040"/>
        <dbReference type="ChEBI" id="CHEBI:29036"/>
        <dbReference type="ChEBI" id="CHEBI:30212"/>
        <dbReference type="ChEBI" id="CHEBI:33737"/>
        <dbReference type="ChEBI" id="CHEBI:33738"/>
        <dbReference type="ChEBI" id="CHEBI:49552"/>
        <dbReference type="EC" id="1.97.1.12"/>
    </reaction>
</comment>
<comment type="cofactor">
    <cofactor evidence="2">
        <name>[4Fe-4S] cluster</name>
        <dbReference type="ChEBI" id="CHEBI:49883"/>
    </cofactor>
    <text evidence="2">Binds 2 [4Fe-4S] clusters. Cluster 2 is most probably the spectroscopically characterized electron acceptor FA and cluster 1 is most probably FB.</text>
</comment>
<comment type="subunit">
    <text evidence="2">The eukaryotic PSI reaction center is composed of at least 11 subunits.</text>
</comment>
<comment type="subcellular location">
    <subcellularLocation>
        <location evidence="2">Plastid</location>
        <location evidence="2">Chloroplast thylakoid membrane</location>
        <topology evidence="2">Peripheral membrane protein</topology>
        <orientation evidence="2">Stromal side</orientation>
    </subcellularLocation>
</comment>
<comment type="caution">
    <text evidence="3">A stretch of the chloroplast genome is duplicated within chromosomes 6 and 7 resulting in the duplication of the gene. The expression of these duplicated genes has not been demonstrated.</text>
</comment>
<geneLocation type="chloroplast"/>
<proteinExistence type="inferred from homology"/>
<sequence>MSHSVKIYDTCIGCTQCVRACPTDVLEMIPWDGCKAKQIASAPRTEDCVGCKRCESACPTDFLSVRVYLGPETTRSMALSY</sequence>
<keyword id="KW-0004">4Fe-4S</keyword>
<keyword id="KW-0150">Chloroplast</keyword>
<keyword id="KW-0249">Electron transport</keyword>
<keyword id="KW-0408">Iron</keyword>
<keyword id="KW-0411">Iron-sulfur</keyword>
<keyword id="KW-0472">Membrane</keyword>
<keyword id="KW-0479">Metal-binding</keyword>
<keyword id="KW-0560">Oxidoreductase</keyword>
<keyword id="KW-0602">Photosynthesis</keyword>
<keyword id="KW-0603">Photosystem I</keyword>
<keyword id="KW-0934">Plastid</keyword>
<keyword id="KW-1185">Reference proteome</keyword>
<keyword id="KW-0677">Repeat</keyword>
<keyword id="KW-0793">Thylakoid</keyword>
<keyword id="KW-0813">Transport</keyword>
<protein>
    <recommendedName>
        <fullName evidence="2">Photosystem I iron-sulfur center</fullName>
        <ecNumber evidence="2">1.97.1.12</ecNumber>
    </recommendedName>
    <alternativeName>
        <fullName evidence="2">9 kDa polypeptide</fullName>
    </alternativeName>
    <alternativeName>
        <fullName evidence="2">PSI-C</fullName>
    </alternativeName>
    <alternativeName>
        <fullName evidence="2">Photosystem I subunit VII</fullName>
    </alternativeName>
    <alternativeName>
        <fullName evidence="2">PsaC</fullName>
    </alternativeName>
</protein>
<organism>
    <name type="scientific">Oryza sativa subsp. japonica</name>
    <name type="common">Rice</name>
    <dbReference type="NCBI Taxonomy" id="39947"/>
    <lineage>
        <taxon>Eukaryota</taxon>
        <taxon>Viridiplantae</taxon>
        <taxon>Streptophyta</taxon>
        <taxon>Embryophyta</taxon>
        <taxon>Tracheophyta</taxon>
        <taxon>Spermatophyta</taxon>
        <taxon>Magnoliopsida</taxon>
        <taxon>Liliopsida</taxon>
        <taxon>Poales</taxon>
        <taxon>Poaceae</taxon>
        <taxon>BOP clade</taxon>
        <taxon>Oryzoideae</taxon>
        <taxon>Oryzeae</taxon>
        <taxon>Oryzinae</taxon>
        <taxon>Oryza</taxon>
        <taxon>Oryza sativa</taxon>
    </lineage>
</organism>
<accession>P0C361</accession>
<accession>P10794</accession>
<accession>P69414</accession>
<accession>Q6QXX3</accession>
<accession>Q6QY36</accession>
<name>PSAC_ORYSJ</name>
<feature type="initiator methionine" description="Removed" evidence="1">
    <location>
        <position position="1"/>
    </location>
</feature>
<feature type="chain" id="PRO_0000288987" description="Photosystem I iron-sulfur center">
    <location>
        <begin position="2"/>
        <end position="81"/>
    </location>
</feature>
<feature type="domain" description="4Fe-4S ferredoxin-type 1" evidence="2">
    <location>
        <begin position="2"/>
        <end position="31"/>
    </location>
</feature>
<feature type="domain" description="4Fe-4S ferredoxin-type 2" evidence="2">
    <location>
        <begin position="39"/>
        <end position="68"/>
    </location>
</feature>
<feature type="binding site" evidence="2">
    <location>
        <position position="11"/>
    </location>
    <ligand>
        <name>[4Fe-4S] cluster</name>
        <dbReference type="ChEBI" id="CHEBI:49883"/>
        <label>1</label>
    </ligand>
</feature>
<feature type="binding site" evidence="2">
    <location>
        <position position="14"/>
    </location>
    <ligand>
        <name>[4Fe-4S] cluster</name>
        <dbReference type="ChEBI" id="CHEBI:49883"/>
        <label>1</label>
    </ligand>
</feature>
<feature type="binding site" evidence="2">
    <location>
        <position position="17"/>
    </location>
    <ligand>
        <name>[4Fe-4S] cluster</name>
        <dbReference type="ChEBI" id="CHEBI:49883"/>
        <label>1</label>
    </ligand>
</feature>
<feature type="binding site" evidence="2">
    <location>
        <position position="21"/>
    </location>
    <ligand>
        <name>[4Fe-4S] cluster</name>
        <dbReference type="ChEBI" id="CHEBI:49883"/>
        <label>2</label>
    </ligand>
</feature>
<feature type="binding site" evidence="2">
    <location>
        <position position="48"/>
    </location>
    <ligand>
        <name>[4Fe-4S] cluster</name>
        <dbReference type="ChEBI" id="CHEBI:49883"/>
        <label>2</label>
    </ligand>
</feature>
<feature type="binding site" evidence="2">
    <location>
        <position position="51"/>
    </location>
    <ligand>
        <name>[4Fe-4S] cluster</name>
        <dbReference type="ChEBI" id="CHEBI:49883"/>
        <label>2</label>
    </ligand>
</feature>
<feature type="binding site" evidence="2">
    <location>
        <position position="54"/>
    </location>
    <ligand>
        <name>[4Fe-4S] cluster</name>
        <dbReference type="ChEBI" id="CHEBI:49883"/>
        <label>2</label>
    </ligand>
</feature>
<feature type="binding site" evidence="2">
    <location>
        <position position="58"/>
    </location>
    <ligand>
        <name>[4Fe-4S] cluster</name>
        <dbReference type="ChEBI" id="CHEBI:49883"/>
        <label>1</label>
    </ligand>
</feature>
<dbReference type="EC" id="1.97.1.12" evidence="2"/>
<dbReference type="EMBL" id="X15901">
    <property type="protein sequence ID" value="CAA33954.1"/>
    <property type="molecule type" value="Genomic_DNA"/>
</dbReference>
<dbReference type="EMBL" id="AY522330">
    <property type="protein sequence ID" value="AAS46158.1"/>
    <property type="molecule type" value="Genomic_DNA"/>
</dbReference>
<dbReference type="EMBL" id="AP003728">
    <property type="protein sequence ID" value="BAD45531.1"/>
    <property type="molecule type" value="Genomic_DNA"/>
</dbReference>
<dbReference type="EMBL" id="AP004989">
    <property type="protein sequence ID" value="BAD45928.1"/>
    <property type="molecule type" value="Genomic_DNA"/>
</dbReference>
<dbReference type="EMBL" id="AP005438">
    <property type="protein sequence ID" value="BAD31378.1"/>
    <property type="molecule type" value="Genomic_DNA"/>
</dbReference>
<dbReference type="PIR" id="JQ0290">
    <property type="entry name" value="FERZA"/>
</dbReference>
<dbReference type="RefSeq" id="NP_039445.1">
    <property type="nucleotide sequence ID" value="NC_001320.1"/>
</dbReference>
<dbReference type="SMR" id="P0C361"/>
<dbReference type="FunCoup" id="P0C361">
    <property type="interactions" value="330"/>
</dbReference>
<dbReference type="STRING" id="39947.P0C361"/>
<dbReference type="PaxDb" id="39947-P0C361"/>
<dbReference type="EnsemblPlants" id="transcript-psaC">
    <property type="protein sequence ID" value="cds-CAA33954.1"/>
    <property type="gene ID" value="gene-psaC"/>
</dbReference>
<dbReference type="GeneID" id="3131408"/>
<dbReference type="Gramene" id="transcript-psaC">
    <property type="protein sequence ID" value="cds-CAA33954.1"/>
    <property type="gene ID" value="gene-psaC"/>
</dbReference>
<dbReference type="KEGG" id="dosa:psaC"/>
<dbReference type="KEGG" id="osa:3131408"/>
<dbReference type="eggNOG" id="KOG4845">
    <property type="taxonomic scope" value="Eukaryota"/>
</dbReference>
<dbReference type="HOGENOM" id="CLU_139698_8_0_1"/>
<dbReference type="InParanoid" id="P0C361"/>
<dbReference type="OrthoDB" id="1865383at2759"/>
<dbReference type="Proteomes" id="UP000000763">
    <property type="component" value="Chromosome 6"/>
</dbReference>
<dbReference type="Proteomes" id="UP000000763">
    <property type="component" value="Chromosome 7"/>
</dbReference>
<dbReference type="Proteomes" id="UP000059680">
    <property type="component" value="Chloroplast"/>
</dbReference>
<dbReference type="GO" id="GO:0009535">
    <property type="term" value="C:chloroplast thylakoid membrane"/>
    <property type="evidence" value="ECO:0007669"/>
    <property type="project" value="UniProtKB-SubCell"/>
</dbReference>
<dbReference type="GO" id="GO:0009522">
    <property type="term" value="C:photosystem I"/>
    <property type="evidence" value="ECO:0007669"/>
    <property type="project" value="UniProtKB-KW"/>
</dbReference>
<dbReference type="GO" id="GO:0009536">
    <property type="term" value="C:plastid"/>
    <property type="evidence" value="ECO:0000305"/>
    <property type="project" value="Gramene"/>
</dbReference>
<dbReference type="GO" id="GO:0051539">
    <property type="term" value="F:4 iron, 4 sulfur cluster binding"/>
    <property type="evidence" value="ECO:0007669"/>
    <property type="project" value="UniProtKB-KW"/>
</dbReference>
<dbReference type="GO" id="GO:0009055">
    <property type="term" value="F:electron transfer activity"/>
    <property type="evidence" value="ECO:0007669"/>
    <property type="project" value="UniProtKB-UniRule"/>
</dbReference>
<dbReference type="GO" id="GO:0046872">
    <property type="term" value="F:metal ion binding"/>
    <property type="evidence" value="ECO:0007669"/>
    <property type="project" value="UniProtKB-KW"/>
</dbReference>
<dbReference type="GO" id="GO:0016491">
    <property type="term" value="F:oxidoreductase activity"/>
    <property type="evidence" value="ECO:0007669"/>
    <property type="project" value="UniProtKB-KW"/>
</dbReference>
<dbReference type="GO" id="GO:0015979">
    <property type="term" value="P:photosynthesis"/>
    <property type="evidence" value="ECO:0000318"/>
    <property type="project" value="GO_Central"/>
</dbReference>
<dbReference type="GO" id="GO:0009773">
    <property type="term" value="P:photosynthetic electron transport in photosystem I"/>
    <property type="evidence" value="ECO:0007669"/>
    <property type="project" value="InterPro"/>
</dbReference>
<dbReference type="FunFam" id="3.30.70.20:FF:000001">
    <property type="entry name" value="Photosystem I iron-sulfur center"/>
    <property type="match status" value="1"/>
</dbReference>
<dbReference type="Gene3D" id="3.30.70.20">
    <property type="match status" value="1"/>
</dbReference>
<dbReference type="HAMAP" id="MF_01303">
    <property type="entry name" value="PSI_PsaC"/>
    <property type="match status" value="1"/>
</dbReference>
<dbReference type="InterPro" id="IPR017896">
    <property type="entry name" value="4Fe4S_Fe-S-bd"/>
</dbReference>
<dbReference type="InterPro" id="IPR017900">
    <property type="entry name" value="4Fe4S_Fe_S_CS"/>
</dbReference>
<dbReference type="InterPro" id="IPR050157">
    <property type="entry name" value="PSI_iron-sulfur_center"/>
</dbReference>
<dbReference type="InterPro" id="IPR017491">
    <property type="entry name" value="PSI_PsaC"/>
</dbReference>
<dbReference type="NCBIfam" id="TIGR03048">
    <property type="entry name" value="PS_I_psaC"/>
    <property type="match status" value="1"/>
</dbReference>
<dbReference type="PANTHER" id="PTHR24960:SF79">
    <property type="entry name" value="PHOTOSYSTEM I IRON-SULFUR CENTER"/>
    <property type="match status" value="1"/>
</dbReference>
<dbReference type="PANTHER" id="PTHR24960">
    <property type="entry name" value="PHOTOSYSTEM I IRON-SULFUR CENTER-RELATED"/>
    <property type="match status" value="1"/>
</dbReference>
<dbReference type="Pfam" id="PF12838">
    <property type="entry name" value="Fer4_7"/>
    <property type="match status" value="1"/>
</dbReference>
<dbReference type="SUPFAM" id="SSF54862">
    <property type="entry name" value="4Fe-4S ferredoxins"/>
    <property type="match status" value="1"/>
</dbReference>
<dbReference type="PROSITE" id="PS00198">
    <property type="entry name" value="4FE4S_FER_1"/>
    <property type="match status" value="2"/>
</dbReference>
<dbReference type="PROSITE" id="PS51379">
    <property type="entry name" value="4FE4S_FER_2"/>
    <property type="match status" value="2"/>
</dbReference>
<reference key="1">
    <citation type="journal article" date="1989" name="Mol. Gen. Genet.">
        <title>The complete sequence of the rice (Oryza sativa) chloroplast genome: intermolecular recombination between distinct tRNA genes accounts for a major plastid DNA inversion during the evolution of the cereals.</title>
        <authorList>
            <person name="Hiratsuka J."/>
            <person name="Shimada H."/>
            <person name="Whittier R."/>
            <person name="Ishibashi T."/>
            <person name="Sakamoto M."/>
            <person name="Mori M."/>
            <person name="Kondo C."/>
            <person name="Honji Y."/>
            <person name="Sun C.-R."/>
            <person name="Meng B.-Y."/>
            <person name="Li Y.-Q."/>
            <person name="Kanno A."/>
            <person name="Nishizawa Y."/>
            <person name="Hirai A."/>
            <person name="Shinozaki K."/>
            <person name="Sugiura M."/>
        </authorList>
    </citation>
    <scope>NUCLEOTIDE SEQUENCE [LARGE SCALE GENOMIC DNA]</scope>
    <source>
        <strain>cv. Nipponbare</strain>
    </source>
</reference>
<reference key="2">
    <citation type="journal article" date="2004" name="Plant Physiol.">
        <title>A comparison of rice chloroplast genomes.</title>
        <authorList>
            <person name="Tang J."/>
            <person name="Xia H."/>
            <person name="Cao M."/>
            <person name="Zhang X."/>
            <person name="Zeng W."/>
            <person name="Hu S."/>
            <person name="Tong W."/>
            <person name="Wang J."/>
            <person name="Wang J."/>
            <person name="Yu J."/>
            <person name="Yang H."/>
            <person name="Zhu L."/>
        </authorList>
    </citation>
    <scope>NUCLEOTIDE SEQUENCE [LARGE SCALE GENOMIC DNA]</scope>
    <source>
        <strain>cv. Nipponbare</strain>
    </source>
</reference>
<reference key="3">
    <citation type="journal article" date="2005" name="Nature">
        <title>The map-based sequence of the rice genome.</title>
        <authorList>
            <consortium name="International rice genome sequencing project (IRGSP)"/>
        </authorList>
    </citation>
    <scope>NUCLEOTIDE SEQUENCE [LARGE SCALE GENOMIC DNA]</scope>
    <source>
        <strain>cv. Nipponbare</strain>
    </source>
</reference>
<reference key="4">
    <citation type="journal article" date="2008" name="Nucleic Acids Res.">
        <title>The rice annotation project database (RAP-DB): 2008 update.</title>
        <authorList>
            <consortium name="The rice annotation project (RAP)"/>
        </authorList>
    </citation>
    <scope>GENOME REANNOTATION</scope>
    <source>
        <strain>cv. Nipponbare</strain>
    </source>
</reference>